<evidence type="ECO:0000250" key="1"/>
<evidence type="ECO:0000250" key="2">
    <source>
        <dbReference type="UniProtKB" id="Q38997"/>
    </source>
</evidence>
<evidence type="ECO:0000250" key="3">
    <source>
        <dbReference type="UniProtKB" id="Q93V58"/>
    </source>
</evidence>
<evidence type="ECO:0000255" key="4">
    <source>
        <dbReference type="PROSITE-ProRule" id="PRU00159"/>
    </source>
</evidence>
<evidence type="ECO:0000255" key="5">
    <source>
        <dbReference type="PROSITE-ProRule" id="PRU00256"/>
    </source>
</evidence>
<evidence type="ECO:0000255" key="6">
    <source>
        <dbReference type="PROSITE-ProRule" id="PRU10027"/>
    </source>
</evidence>
<evidence type="ECO:0000256" key="7">
    <source>
        <dbReference type="SAM" id="MobiDB-lite"/>
    </source>
</evidence>
<evidence type="ECO:0000305" key="8"/>
<organism>
    <name type="scientific">Arabidopsis thaliana</name>
    <name type="common">Mouse-ear cress</name>
    <dbReference type="NCBI Taxonomy" id="3702"/>
    <lineage>
        <taxon>Eukaryota</taxon>
        <taxon>Viridiplantae</taxon>
        <taxon>Streptophyta</taxon>
        <taxon>Embryophyta</taxon>
        <taxon>Tracheophyta</taxon>
        <taxon>Spermatophyta</taxon>
        <taxon>Magnoliopsida</taxon>
        <taxon>eudicotyledons</taxon>
        <taxon>Gunneridae</taxon>
        <taxon>Pentapetalae</taxon>
        <taxon>rosids</taxon>
        <taxon>malvids</taxon>
        <taxon>Brassicales</taxon>
        <taxon>Brassicaceae</taxon>
        <taxon>Camelineae</taxon>
        <taxon>Arabidopsis</taxon>
    </lineage>
</organism>
<keyword id="KW-0067">ATP-binding</keyword>
<keyword id="KW-0418">Kinase</keyword>
<keyword id="KW-0464">Manganese</keyword>
<keyword id="KW-0547">Nucleotide-binding</keyword>
<keyword id="KW-0597">Phosphoprotein</keyword>
<keyword id="KW-1185">Reference proteome</keyword>
<keyword id="KW-0723">Serine/threonine-protein kinase</keyword>
<keyword id="KW-0808">Transferase</keyword>
<protein>
    <recommendedName>
        <fullName>CBL-interacting serine/threonine-protein kinase 19</fullName>
        <ecNumber>2.7.11.1</ecNumber>
    </recommendedName>
    <alternativeName>
        <fullName>SNF1-related kinase 3.5</fullName>
    </alternativeName>
    <alternativeName>
        <fullName>SOS2-like protein kinase PKS21</fullName>
    </alternativeName>
</protein>
<reference key="1">
    <citation type="submission" date="2001-04" db="EMBL/GenBank/DDBJ databases">
        <title>Molecular characterization of the CIPK gene family from Arabidopsis thaliana.</title>
        <authorList>
            <person name="Weinl S."/>
            <person name="Albrecht V."/>
            <person name="Kudla J."/>
        </authorList>
    </citation>
    <scope>NUCLEOTIDE SEQUENCE [MRNA]</scope>
</reference>
<reference key="2">
    <citation type="journal article" date="1998" name="DNA Res.">
        <title>Structural analysis of Arabidopsis thaliana chromosome 5. VIII. Sequence features of the regions of 1,081,958 bp covered by seventeen physically assigned P1 and TAC clones.</title>
        <authorList>
            <person name="Asamizu E."/>
            <person name="Sato S."/>
            <person name="Kaneko T."/>
            <person name="Nakamura Y."/>
            <person name="Kotani H."/>
            <person name="Miyajima N."/>
            <person name="Tabata S."/>
        </authorList>
    </citation>
    <scope>NUCLEOTIDE SEQUENCE [LARGE SCALE GENOMIC DNA]</scope>
    <source>
        <strain>cv. Columbia</strain>
    </source>
</reference>
<reference key="3">
    <citation type="journal article" date="2017" name="Plant J.">
        <title>Araport11: a complete reannotation of the Arabidopsis thaliana reference genome.</title>
        <authorList>
            <person name="Cheng C.Y."/>
            <person name="Krishnakumar V."/>
            <person name="Chan A.P."/>
            <person name="Thibaud-Nissen F."/>
            <person name="Schobel S."/>
            <person name="Town C.D."/>
        </authorList>
    </citation>
    <scope>GENOME REANNOTATION</scope>
    <source>
        <strain>cv. Columbia</strain>
    </source>
</reference>
<reference key="4">
    <citation type="journal article" date="2006" name="Plant Biotechnol. J.">
        <title>Simultaneous high-throughput recombinational cloning of open reading frames in closed and open configurations.</title>
        <authorList>
            <person name="Underwood B.A."/>
            <person name="Vanderhaeghen R."/>
            <person name="Whitford R."/>
            <person name="Town C.D."/>
            <person name="Hilson P."/>
        </authorList>
    </citation>
    <scope>NUCLEOTIDE SEQUENCE [LARGE SCALE MRNA]</scope>
    <source>
        <strain>cv. Columbia</strain>
    </source>
</reference>
<reference key="5">
    <citation type="journal article" date="2003" name="Plant Physiol.">
        <title>The Arabidopsis CDPK-SnRK superfamily of protein kinases.</title>
        <authorList>
            <person name="Hrabak E.M."/>
            <person name="Chan C.W.M."/>
            <person name="Gribskov M."/>
            <person name="Harper J.F."/>
            <person name="Choi J.H."/>
            <person name="Halford N."/>
            <person name="Kudla J."/>
            <person name="Luan S."/>
            <person name="Nimmo H.G."/>
            <person name="Sussman M.R."/>
            <person name="Thomas M."/>
            <person name="Walker-Simmons K."/>
            <person name="Zhu J.-K."/>
            <person name="Harmon A.C."/>
        </authorList>
    </citation>
    <scope>GENE FAMILY</scope>
    <scope>NOMENCLATURE</scope>
</reference>
<name>CIPKJ_ARATH</name>
<accession>Q9FJ55</accession>
<proteinExistence type="evidence at protein level"/>
<gene>
    <name type="primary">CIPK19</name>
    <name type="synonym">PKS21</name>
    <name type="synonym">SnRK3.5</name>
    <name type="ordered locus">At5g45810</name>
    <name type="ORF">K15I22.1</name>
</gene>
<dbReference type="EC" id="2.7.11.1"/>
<dbReference type="EMBL" id="AY030303">
    <property type="protein sequence ID" value="AAK50347.1"/>
    <property type="molecule type" value="mRNA"/>
</dbReference>
<dbReference type="EMBL" id="AB016870">
    <property type="protein sequence ID" value="BAB09309.1"/>
    <property type="molecule type" value="Genomic_DNA"/>
</dbReference>
<dbReference type="EMBL" id="CP002688">
    <property type="protein sequence ID" value="AED95302.1"/>
    <property type="molecule type" value="Genomic_DNA"/>
</dbReference>
<dbReference type="EMBL" id="DQ447041">
    <property type="protein sequence ID" value="ABE66223.1"/>
    <property type="molecule type" value="mRNA"/>
</dbReference>
<dbReference type="RefSeq" id="NP_199393.1">
    <property type="nucleotide sequence ID" value="NM_123949.2"/>
</dbReference>
<dbReference type="SMR" id="Q9FJ55"/>
<dbReference type="BioGRID" id="19870">
    <property type="interactions" value="4"/>
</dbReference>
<dbReference type="FunCoup" id="Q9FJ55">
    <property type="interactions" value="995"/>
</dbReference>
<dbReference type="IntAct" id="Q9FJ55">
    <property type="interactions" value="4"/>
</dbReference>
<dbReference type="STRING" id="3702.Q9FJ55"/>
<dbReference type="PaxDb" id="3702-AT5G45810.1"/>
<dbReference type="ProteomicsDB" id="246861"/>
<dbReference type="EnsemblPlants" id="AT5G45810.1">
    <property type="protein sequence ID" value="AT5G45810.1"/>
    <property type="gene ID" value="AT5G45810"/>
</dbReference>
<dbReference type="GeneID" id="834621"/>
<dbReference type="Gramene" id="AT5G45810.1">
    <property type="protein sequence ID" value="AT5G45810.1"/>
    <property type="gene ID" value="AT5G45810"/>
</dbReference>
<dbReference type="KEGG" id="ath:AT5G45810"/>
<dbReference type="Araport" id="AT5G45810"/>
<dbReference type="TAIR" id="AT5G45810">
    <property type="gene designation" value="CIPK19"/>
</dbReference>
<dbReference type="eggNOG" id="KOG0583">
    <property type="taxonomic scope" value="Eukaryota"/>
</dbReference>
<dbReference type="HOGENOM" id="CLU_000288_59_0_1"/>
<dbReference type="InParanoid" id="Q9FJ55"/>
<dbReference type="OMA" id="MEYDEFC"/>
<dbReference type="PhylomeDB" id="Q9FJ55"/>
<dbReference type="PRO" id="PR:Q9FJ55"/>
<dbReference type="Proteomes" id="UP000006548">
    <property type="component" value="Chromosome 5"/>
</dbReference>
<dbReference type="ExpressionAtlas" id="Q9FJ55">
    <property type="expression patterns" value="baseline and differential"/>
</dbReference>
<dbReference type="GO" id="GO:0005524">
    <property type="term" value="F:ATP binding"/>
    <property type="evidence" value="ECO:0007669"/>
    <property type="project" value="UniProtKB-KW"/>
</dbReference>
<dbReference type="GO" id="GO:0106310">
    <property type="term" value="F:protein serine kinase activity"/>
    <property type="evidence" value="ECO:0007669"/>
    <property type="project" value="RHEA"/>
</dbReference>
<dbReference type="GO" id="GO:0004674">
    <property type="term" value="F:protein serine/threonine kinase activity"/>
    <property type="evidence" value="ECO:0007669"/>
    <property type="project" value="UniProtKB-KW"/>
</dbReference>
<dbReference type="GO" id="GO:0007165">
    <property type="term" value="P:signal transduction"/>
    <property type="evidence" value="ECO:0007669"/>
    <property type="project" value="InterPro"/>
</dbReference>
<dbReference type="CDD" id="cd12195">
    <property type="entry name" value="CIPK_C"/>
    <property type="match status" value="1"/>
</dbReference>
<dbReference type="CDD" id="cd14663">
    <property type="entry name" value="STKc_SnRK3"/>
    <property type="match status" value="1"/>
</dbReference>
<dbReference type="FunFam" id="1.10.510.10:FF:000653">
    <property type="entry name" value="Non-specific serine/threonine protein kinase"/>
    <property type="match status" value="1"/>
</dbReference>
<dbReference type="FunFam" id="3.30.200.20:FF:000096">
    <property type="entry name" value="Non-specific serine/threonine protein kinase"/>
    <property type="match status" value="1"/>
</dbReference>
<dbReference type="FunFam" id="3.30.310.80:FF:000015">
    <property type="entry name" value="Non-specific serine/threonine protein kinase"/>
    <property type="match status" value="1"/>
</dbReference>
<dbReference type="Gene3D" id="3.30.310.80">
    <property type="entry name" value="Kinase associated domain 1, KA1"/>
    <property type="match status" value="1"/>
</dbReference>
<dbReference type="Gene3D" id="1.10.510.10">
    <property type="entry name" value="Transferase(Phosphotransferase) domain 1"/>
    <property type="match status" value="1"/>
</dbReference>
<dbReference type="InterPro" id="IPR011009">
    <property type="entry name" value="Kinase-like_dom_sf"/>
</dbReference>
<dbReference type="InterPro" id="IPR018451">
    <property type="entry name" value="NAF/FISL_domain"/>
</dbReference>
<dbReference type="InterPro" id="IPR004041">
    <property type="entry name" value="NAF_dom"/>
</dbReference>
<dbReference type="InterPro" id="IPR000719">
    <property type="entry name" value="Prot_kinase_dom"/>
</dbReference>
<dbReference type="InterPro" id="IPR017441">
    <property type="entry name" value="Protein_kinase_ATP_BS"/>
</dbReference>
<dbReference type="InterPro" id="IPR008271">
    <property type="entry name" value="Ser/Thr_kinase_AS"/>
</dbReference>
<dbReference type="PANTHER" id="PTHR43895">
    <property type="entry name" value="CALCIUM/CALMODULIN-DEPENDENT PROTEIN KINASE KINASE-RELATED"/>
    <property type="match status" value="1"/>
</dbReference>
<dbReference type="PANTHER" id="PTHR43895:SF76">
    <property type="entry name" value="CBL-INTERACTING SERINE_THREONINE-PROTEIN KINASE 19"/>
    <property type="match status" value="1"/>
</dbReference>
<dbReference type="Pfam" id="PF03822">
    <property type="entry name" value="NAF"/>
    <property type="match status" value="1"/>
</dbReference>
<dbReference type="Pfam" id="PF00069">
    <property type="entry name" value="Pkinase"/>
    <property type="match status" value="1"/>
</dbReference>
<dbReference type="SMART" id="SM00220">
    <property type="entry name" value="S_TKc"/>
    <property type="match status" value="1"/>
</dbReference>
<dbReference type="SUPFAM" id="SSF56112">
    <property type="entry name" value="Protein kinase-like (PK-like)"/>
    <property type="match status" value="1"/>
</dbReference>
<dbReference type="PROSITE" id="PS50816">
    <property type="entry name" value="NAF"/>
    <property type="match status" value="1"/>
</dbReference>
<dbReference type="PROSITE" id="PS00107">
    <property type="entry name" value="PROTEIN_KINASE_ATP"/>
    <property type="match status" value="1"/>
</dbReference>
<dbReference type="PROSITE" id="PS50011">
    <property type="entry name" value="PROTEIN_KINASE_DOM"/>
    <property type="match status" value="1"/>
</dbReference>
<dbReference type="PROSITE" id="PS00108">
    <property type="entry name" value="PROTEIN_KINASE_ST"/>
    <property type="match status" value="1"/>
</dbReference>
<feature type="chain" id="PRO_0000337220" description="CBL-interacting serine/threonine-protein kinase 19">
    <location>
        <begin position="1"/>
        <end position="483"/>
    </location>
</feature>
<feature type="domain" description="Protein kinase" evidence="4">
    <location>
        <begin position="28"/>
        <end position="282"/>
    </location>
</feature>
<feature type="domain" description="NAF" evidence="5">
    <location>
        <begin position="340"/>
        <end position="364"/>
    </location>
</feature>
<feature type="region of interest" description="Activation loop" evidence="1">
    <location>
        <begin position="168"/>
        <end position="197"/>
    </location>
</feature>
<feature type="region of interest" description="Disordered" evidence="7">
    <location>
        <begin position="313"/>
        <end position="338"/>
    </location>
</feature>
<feature type="region of interest" description="PPI" evidence="1">
    <location>
        <begin position="367"/>
        <end position="396"/>
    </location>
</feature>
<feature type="region of interest" description="Disordered" evidence="7">
    <location>
        <begin position="459"/>
        <end position="483"/>
    </location>
</feature>
<feature type="compositionally biased region" description="Polar residues" evidence="7">
    <location>
        <begin position="313"/>
        <end position="322"/>
    </location>
</feature>
<feature type="active site" description="Proton acceptor" evidence="4 6">
    <location>
        <position position="150"/>
    </location>
</feature>
<feature type="binding site" evidence="4">
    <location>
        <begin position="34"/>
        <end position="42"/>
    </location>
    <ligand>
        <name>ATP</name>
        <dbReference type="ChEBI" id="CHEBI:30616"/>
    </ligand>
</feature>
<feature type="binding site" evidence="4">
    <location>
        <position position="57"/>
    </location>
    <ligand>
        <name>ATP</name>
        <dbReference type="ChEBI" id="CHEBI:30616"/>
    </ligand>
</feature>
<feature type="modified residue" description="Phosphoserine" evidence="3">
    <location>
        <position position="172"/>
    </location>
</feature>
<feature type="modified residue" description="Phosphothreonine" evidence="2">
    <location>
        <position position="186"/>
    </location>
</feature>
<comment type="function">
    <text evidence="1">CIPK serine-threonine protein kinases interact with CBL proteins. Binding of a CBL protein to the regulatory NAF domain of CIPK protein lead to the activation of the kinase in a calcium-dependent manner (By similarity).</text>
</comment>
<comment type="catalytic activity">
    <reaction>
        <text>L-seryl-[protein] + ATP = O-phospho-L-seryl-[protein] + ADP + H(+)</text>
        <dbReference type="Rhea" id="RHEA:17989"/>
        <dbReference type="Rhea" id="RHEA-COMP:9863"/>
        <dbReference type="Rhea" id="RHEA-COMP:11604"/>
        <dbReference type="ChEBI" id="CHEBI:15378"/>
        <dbReference type="ChEBI" id="CHEBI:29999"/>
        <dbReference type="ChEBI" id="CHEBI:30616"/>
        <dbReference type="ChEBI" id="CHEBI:83421"/>
        <dbReference type="ChEBI" id="CHEBI:456216"/>
        <dbReference type="EC" id="2.7.11.1"/>
    </reaction>
</comment>
<comment type="catalytic activity">
    <reaction>
        <text>L-threonyl-[protein] + ATP = O-phospho-L-threonyl-[protein] + ADP + H(+)</text>
        <dbReference type="Rhea" id="RHEA:46608"/>
        <dbReference type="Rhea" id="RHEA-COMP:11060"/>
        <dbReference type="Rhea" id="RHEA-COMP:11605"/>
        <dbReference type="ChEBI" id="CHEBI:15378"/>
        <dbReference type="ChEBI" id="CHEBI:30013"/>
        <dbReference type="ChEBI" id="CHEBI:30616"/>
        <dbReference type="ChEBI" id="CHEBI:61977"/>
        <dbReference type="ChEBI" id="CHEBI:456216"/>
        <dbReference type="EC" id="2.7.11.1"/>
    </reaction>
</comment>
<comment type="cofactor">
    <cofactor evidence="1">
        <name>Mn(2+)</name>
        <dbReference type="ChEBI" id="CHEBI:29035"/>
    </cofactor>
</comment>
<comment type="interaction">
    <interactant intactId="EBI-16967606">
        <id>Q9FJ55</id>
    </interactant>
    <interactant intactId="EBI-25512239">
        <id>Q9ZR37</id>
        <label>DSPTP1</label>
    </interactant>
    <organismsDiffer>false</organismsDiffer>
    <experiments>3</experiments>
</comment>
<comment type="interaction">
    <interactant intactId="EBI-16967606">
        <id>Q9FJ55</id>
    </interactant>
    <interactant intactId="EBI-1645478">
        <id>Q38845</id>
        <label>PP2AA1</label>
    </interactant>
    <organismsDiffer>false</organismsDiffer>
    <experiments>3</experiments>
</comment>
<comment type="interaction">
    <interactant intactId="EBI-16967606">
        <id>Q9FJ55</id>
    </interactant>
    <interactant intactId="EBI-15192297">
        <id>Q9LQF0</id>
        <label>TCP23</label>
    </interactant>
    <organismsDiffer>false</organismsDiffer>
    <experiments>3</experiments>
</comment>
<comment type="domain">
    <text evidence="1">The activation loop within the kinase domain is the target of phosphorylation/activation by upstream protein kinases. The PPI motif mediates the interaction with the ABI (abscisic acid-insensitive) phosphatases (By similarity).</text>
</comment>
<comment type="similarity">
    <text evidence="8">Belongs to the protein kinase superfamily. CAMK Ser/Thr protein kinase family. SNF1 subfamily.</text>
</comment>
<sequence length="483" mass="54616">MADLLRKVKSIKKKQDQSNHQALILGKYEMGRLLGHGTFAKVYLARNAQSGESVAIKVIDKEKVLKSGLIAHIKREISILRRVRHPNIVQLFEVMATKSKIYFVMEYVKGGELFNKVAKGRLKEEMARKYFQQLISAVSFCHFRGVYHRDLKPENLLLDENGNLKVSDFGLSAVSDQIRQDGLFHTFCGTPAYVAPEVLARKGYDGAKVDIWSCGVILFVLMAGFLPFHDRNVMAMYKKIYRGDFRCPRWFPVEINRLLIRMLETKPERRFTMPDIMETSWFKKGFKHIKFYVEDDHQLCNVADDDEIESIESVSGRSSTVSEPEDFESFDGRRRGGSMPRPASLNAFDLISFSPGFDLSGLFEDDGEGSRFVSGAPVGQIISKLEEIARIVSFTVRKKDCKVSLEGSREGSMKGPLSIAAEIFELTPALVVVEVKKKGGDKMEYDEFCNKELKPKLQNLSSENGQRVSGSRSLPSFLLSDTD</sequence>